<accession>B7KJP1</accession>
<comment type="function">
    <text evidence="1">Component of the cytochrome b6-f complex, which mediates electron transfer between photosystem II (PSII) and photosystem I (PSI), cyclic electron flow around PSI, and state transitions.</text>
</comment>
<comment type="subunit">
    <text evidence="1">The 4 large subunits of the cytochrome b6-f complex are cytochrome b6, subunit IV (17 kDa polypeptide, PetD), cytochrome f and the Rieske protein, while the 4 small subunits are PetG, PetL, PetM and PetN. The complex functions as a dimer.</text>
</comment>
<comment type="subcellular location">
    <subcellularLocation>
        <location evidence="1">Cellular thylakoid membrane</location>
        <topology evidence="1">Single-pass membrane protein</topology>
    </subcellularLocation>
</comment>
<comment type="similarity">
    <text evidence="1">Belongs to the PetN family.</text>
</comment>
<gene>
    <name evidence="1" type="primary">petN</name>
    <name type="ordered locus">PCC7424_1036</name>
</gene>
<reference key="1">
    <citation type="journal article" date="2011" name="MBio">
        <title>Novel metabolic attributes of the genus Cyanothece, comprising a group of unicellular nitrogen-fixing Cyanobacteria.</title>
        <authorList>
            <person name="Bandyopadhyay A."/>
            <person name="Elvitigala T."/>
            <person name="Welsh E."/>
            <person name="Stockel J."/>
            <person name="Liberton M."/>
            <person name="Min H."/>
            <person name="Sherman L.A."/>
            <person name="Pakrasi H.B."/>
        </authorList>
    </citation>
    <scope>NUCLEOTIDE SEQUENCE [LARGE SCALE GENOMIC DNA]</scope>
    <source>
        <strain>PCC 7424</strain>
    </source>
</reference>
<keyword id="KW-0249">Electron transport</keyword>
<keyword id="KW-0472">Membrane</keyword>
<keyword id="KW-0602">Photosynthesis</keyword>
<keyword id="KW-1185">Reference proteome</keyword>
<keyword id="KW-0793">Thylakoid</keyword>
<keyword id="KW-0812">Transmembrane</keyword>
<keyword id="KW-1133">Transmembrane helix</keyword>
<keyword id="KW-0813">Transport</keyword>
<dbReference type="EMBL" id="CP001291">
    <property type="protein sequence ID" value="ACK69490.1"/>
    <property type="molecule type" value="Genomic_DNA"/>
</dbReference>
<dbReference type="RefSeq" id="WP_008277373.1">
    <property type="nucleotide sequence ID" value="NC_011729.1"/>
</dbReference>
<dbReference type="SMR" id="B7KJP1"/>
<dbReference type="STRING" id="65393.PCC7424_1036"/>
<dbReference type="GeneID" id="88769458"/>
<dbReference type="KEGG" id="cyc:PCC7424_1036"/>
<dbReference type="eggNOG" id="ENOG5033AE4">
    <property type="taxonomic scope" value="Bacteria"/>
</dbReference>
<dbReference type="HOGENOM" id="CLU_215774_1_0_3"/>
<dbReference type="Proteomes" id="UP000002384">
    <property type="component" value="Chromosome"/>
</dbReference>
<dbReference type="GO" id="GO:0009512">
    <property type="term" value="C:cytochrome b6f complex"/>
    <property type="evidence" value="ECO:0007669"/>
    <property type="project" value="InterPro"/>
</dbReference>
<dbReference type="GO" id="GO:0031676">
    <property type="term" value="C:plasma membrane-derived thylakoid membrane"/>
    <property type="evidence" value="ECO:0007669"/>
    <property type="project" value="UniProtKB-SubCell"/>
</dbReference>
<dbReference type="GO" id="GO:0045158">
    <property type="term" value="F:electron transporter, transferring electrons within cytochrome b6/f complex of photosystem II activity"/>
    <property type="evidence" value="ECO:0007669"/>
    <property type="project" value="InterPro"/>
</dbReference>
<dbReference type="GO" id="GO:0017004">
    <property type="term" value="P:cytochrome complex assembly"/>
    <property type="evidence" value="ECO:0007669"/>
    <property type="project" value="UniProtKB-UniRule"/>
</dbReference>
<dbReference type="GO" id="GO:0015979">
    <property type="term" value="P:photosynthesis"/>
    <property type="evidence" value="ECO:0007669"/>
    <property type="project" value="UniProtKB-KW"/>
</dbReference>
<dbReference type="HAMAP" id="MF_00395">
    <property type="entry name" value="Cytb6_f_PetN"/>
    <property type="match status" value="1"/>
</dbReference>
<dbReference type="InterPro" id="IPR036143">
    <property type="entry name" value="Cytochr_b6-f_cplx_su8_sf"/>
</dbReference>
<dbReference type="InterPro" id="IPR005497">
    <property type="entry name" value="Cytochrome_b6-f_cplx_su8"/>
</dbReference>
<dbReference type="NCBIfam" id="NF011331">
    <property type="entry name" value="PRK14747.1"/>
    <property type="match status" value="1"/>
</dbReference>
<dbReference type="Pfam" id="PF03742">
    <property type="entry name" value="PetN"/>
    <property type="match status" value="1"/>
</dbReference>
<dbReference type="SUPFAM" id="SSF103451">
    <property type="entry name" value="PetN subunit of the cytochrome b6f complex"/>
    <property type="match status" value="1"/>
</dbReference>
<protein>
    <recommendedName>
        <fullName evidence="1">Cytochrome b6-f complex subunit 8</fullName>
    </recommendedName>
    <alternativeName>
        <fullName evidence="1">Cytochrome b6-f complex subunit PetN</fullName>
    </alternativeName>
    <alternativeName>
        <fullName evidence="1">Cytochrome b6-f complex subunit VIII</fullName>
    </alternativeName>
</protein>
<sequence length="29" mass="3254">MDILALGWVSVLALFTWSIAMVVWGRNGF</sequence>
<name>PETN_GLOC7</name>
<evidence type="ECO:0000255" key="1">
    <source>
        <dbReference type="HAMAP-Rule" id="MF_00395"/>
    </source>
</evidence>
<organism>
    <name type="scientific">Gloeothece citriformis (strain PCC 7424)</name>
    <name type="common">Cyanothece sp. (strain PCC 7424)</name>
    <dbReference type="NCBI Taxonomy" id="65393"/>
    <lineage>
        <taxon>Bacteria</taxon>
        <taxon>Bacillati</taxon>
        <taxon>Cyanobacteriota</taxon>
        <taxon>Cyanophyceae</taxon>
        <taxon>Oscillatoriophycideae</taxon>
        <taxon>Chroococcales</taxon>
        <taxon>Aphanothecaceae</taxon>
        <taxon>Gloeothece</taxon>
        <taxon>Gloeothece citriformis</taxon>
    </lineage>
</organism>
<feature type="chain" id="PRO_1000192355" description="Cytochrome b6-f complex subunit 8">
    <location>
        <begin position="1"/>
        <end position="29"/>
    </location>
</feature>
<feature type="transmembrane region" description="Helical" evidence="1">
    <location>
        <begin position="3"/>
        <end position="23"/>
    </location>
</feature>
<proteinExistence type="inferred from homology"/>